<evidence type="ECO:0000255" key="1">
    <source>
        <dbReference type="HAMAP-Rule" id="MF_00652"/>
    </source>
</evidence>
<comment type="similarity">
    <text evidence="1">Belongs to the UPF0246 family.</text>
</comment>
<accession>Q036P0</accession>
<gene>
    <name type="ordered locus">LSEI_2080</name>
</gene>
<feature type="chain" id="PRO_1000061610" description="UPF0246 protein LSEI_2080">
    <location>
        <begin position="1"/>
        <end position="247"/>
    </location>
</feature>
<keyword id="KW-1185">Reference proteome</keyword>
<sequence length="247" mass="28514">MKFIIAPAKKMIRAQDDFPVQSQPKYRAQAGELLLLMQQLTFSEAQALWHTSDKLTQTAYNQLQQSDLTRQQSPAIFSYSGIQYQYMAPDLLDDAGLVYIQQHLRILSGLYGILRPFDGVVPYRLEMQNHLRLPHHRNLYDFWGNRLYQALARMPGPIINLASDEYAKAIRPYLQAKDQFIDVRFAHRVNGQLKTRATYAKMARGEMIRFAASHRLTKAADLKNFDSPTYRFDSHLSTATQLVFIAK</sequence>
<protein>
    <recommendedName>
        <fullName evidence="1">UPF0246 protein LSEI_2080</fullName>
    </recommendedName>
</protein>
<organism>
    <name type="scientific">Lacticaseibacillus paracasei (strain ATCC 334 / BCRC 17002 / CCUG 31169 / CIP 107868 / KCTC 3260 / NRRL B-441)</name>
    <name type="common">Lactobacillus paracasei</name>
    <dbReference type="NCBI Taxonomy" id="321967"/>
    <lineage>
        <taxon>Bacteria</taxon>
        <taxon>Bacillati</taxon>
        <taxon>Bacillota</taxon>
        <taxon>Bacilli</taxon>
        <taxon>Lactobacillales</taxon>
        <taxon>Lactobacillaceae</taxon>
        <taxon>Lacticaseibacillus</taxon>
    </lineage>
</organism>
<dbReference type="EMBL" id="CP000423">
    <property type="protein sequence ID" value="ABJ70832.1"/>
    <property type="molecule type" value="Genomic_DNA"/>
</dbReference>
<dbReference type="RefSeq" id="WP_011674749.1">
    <property type="nucleotide sequence ID" value="NC_008526.1"/>
</dbReference>
<dbReference type="RefSeq" id="YP_807274.1">
    <property type="nucleotide sequence ID" value="NC_008526.1"/>
</dbReference>
<dbReference type="SMR" id="Q036P0"/>
<dbReference type="STRING" id="321967.LSEI_2080"/>
<dbReference type="PaxDb" id="321967-LSEI_2080"/>
<dbReference type="KEGG" id="lca:LSEI_2080"/>
<dbReference type="PATRIC" id="fig|321967.11.peg.2044"/>
<dbReference type="HOGENOM" id="CLU_061989_1_0_9"/>
<dbReference type="Proteomes" id="UP000001651">
    <property type="component" value="Chromosome"/>
</dbReference>
<dbReference type="GO" id="GO:0005829">
    <property type="term" value="C:cytosol"/>
    <property type="evidence" value="ECO:0007669"/>
    <property type="project" value="TreeGrafter"/>
</dbReference>
<dbReference type="GO" id="GO:0033194">
    <property type="term" value="P:response to hydroperoxide"/>
    <property type="evidence" value="ECO:0007669"/>
    <property type="project" value="TreeGrafter"/>
</dbReference>
<dbReference type="HAMAP" id="MF_00652">
    <property type="entry name" value="UPF0246"/>
    <property type="match status" value="1"/>
</dbReference>
<dbReference type="InterPro" id="IPR005583">
    <property type="entry name" value="YaaA"/>
</dbReference>
<dbReference type="NCBIfam" id="NF002543">
    <property type="entry name" value="PRK02101.1-4"/>
    <property type="match status" value="1"/>
</dbReference>
<dbReference type="PANTHER" id="PTHR30283:SF4">
    <property type="entry name" value="PEROXIDE STRESS RESISTANCE PROTEIN YAAA"/>
    <property type="match status" value="1"/>
</dbReference>
<dbReference type="PANTHER" id="PTHR30283">
    <property type="entry name" value="PEROXIDE STRESS RESPONSE PROTEIN YAAA"/>
    <property type="match status" value="1"/>
</dbReference>
<dbReference type="Pfam" id="PF03883">
    <property type="entry name" value="H2O2_YaaD"/>
    <property type="match status" value="1"/>
</dbReference>
<reference key="1">
    <citation type="journal article" date="2006" name="Proc. Natl. Acad. Sci. U.S.A.">
        <title>Comparative genomics of the lactic acid bacteria.</title>
        <authorList>
            <person name="Makarova K.S."/>
            <person name="Slesarev A."/>
            <person name="Wolf Y.I."/>
            <person name="Sorokin A."/>
            <person name="Mirkin B."/>
            <person name="Koonin E.V."/>
            <person name="Pavlov A."/>
            <person name="Pavlova N."/>
            <person name="Karamychev V."/>
            <person name="Polouchine N."/>
            <person name="Shakhova V."/>
            <person name="Grigoriev I."/>
            <person name="Lou Y."/>
            <person name="Rohksar D."/>
            <person name="Lucas S."/>
            <person name="Huang K."/>
            <person name="Goodstein D.M."/>
            <person name="Hawkins T."/>
            <person name="Plengvidhya V."/>
            <person name="Welker D."/>
            <person name="Hughes J."/>
            <person name="Goh Y."/>
            <person name="Benson A."/>
            <person name="Baldwin K."/>
            <person name="Lee J.-H."/>
            <person name="Diaz-Muniz I."/>
            <person name="Dosti B."/>
            <person name="Smeianov V."/>
            <person name="Wechter W."/>
            <person name="Barabote R."/>
            <person name="Lorca G."/>
            <person name="Altermann E."/>
            <person name="Barrangou R."/>
            <person name="Ganesan B."/>
            <person name="Xie Y."/>
            <person name="Rawsthorne H."/>
            <person name="Tamir D."/>
            <person name="Parker C."/>
            <person name="Breidt F."/>
            <person name="Broadbent J.R."/>
            <person name="Hutkins R."/>
            <person name="O'Sullivan D."/>
            <person name="Steele J."/>
            <person name="Unlu G."/>
            <person name="Saier M.H. Jr."/>
            <person name="Klaenhammer T."/>
            <person name="Richardson P."/>
            <person name="Kozyavkin S."/>
            <person name="Weimer B.C."/>
            <person name="Mills D.A."/>
        </authorList>
    </citation>
    <scope>NUCLEOTIDE SEQUENCE [LARGE SCALE GENOMIC DNA]</scope>
    <source>
        <strain>ATCC 334 / BCRC 17002 / CCUG 31169 / CIP 107868 / KCTC 3260 / NRRL B-441</strain>
    </source>
</reference>
<proteinExistence type="inferred from homology"/>
<name>Y2080_LACP3</name>